<name>MYB17_ARATH</name>
<keyword id="KW-0238">DNA-binding</keyword>
<keyword id="KW-0287">Flowering</keyword>
<keyword id="KW-0539">Nucleus</keyword>
<keyword id="KW-1185">Reference proteome</keyword>
<keyword id="KW-0677">Repeat</keyword>
<keyword id="KW-0804">Transcription</keyword>
<keyword id="KW-0805">Transcription regulation</keyword>
<comment type="function">
    <text evidence="2 3">Transcription factor that may play a role in flower development by repressing ANT (PubMed:19232308). Regulates the transition of meristem identity from vegetative growth to flowering. Acts downstream of LFY and upstream of AP1. Directly activates AP1 to promote floral fate. Together with LFY and AP1 may constitute a regulatory network that contributes to an abrupt and robust meristem identity transition (PubMed:21750030).</text>
</comment>
<comment type="subunit">
    <text evidence="3">Interacts with LFY.</text>
</comment>
<comment type="subcellular location">
    <subcellularLocation>
        <location evidence="1 2 3">Nucleus</location>
    </subcellularLocation>
</comment>
<comment type="tissue specificity">
    <text evidence="2 3">Expressed in the shoot apex, young flower buds, developing carpels and siliques (PubMed:19232308). Expressed in floral meristem, initiating floral primordia and developing flowers (PubMed:21750030).</text>
</comment>
<comment type="developmental stage">
    <text evidence="2">Expressed in cotyledon and hypocotyls of germinating seeds.</text>
</comment>
<comment type="disruption phenotype">
    <text evidence="3">Meristem identity phenotype; increased number of cauline leaves and secondary inflorescences.</text>
</comment>
<gene>
    <name evidence="4" type="primary">MYB17</name>
    <name evidence="5" type="synonym">LMI2</name>
    <name evidence="7" type="ordered locus">At3g61250</name>
    <name evidence="8" type="ORF">T20K12.150</name>
</gene>
<organism>
    <name type="scientific">Arabidopsis thaliana</name>
    <name type="common">Mouse-ear cress</name>
    <dbReference type="NCBI Taxonomy" id="3702"/>
    <lineage>
        <taxon>Eukaryota</taxon>
        <taxon>Viridiplantae</taxon>
        <taxon>Streptophyta</taxon>
        <taxon>Embryophyta</taxon>
        <taxon>Tracheophyta</taxon>
        <taxon>Spermatophyta</taxon>
        <taxon>Magnoliopsida</taxon>
        <taxon>eudicotyledons</taxon>
        <taxon>Gunneridae</taxon>
        <taxon>Pentapetalae</taxon>
        <taxon>rosids</taxon>
        <taxon>malvids</taxon>
        <taxon>Brassicales</taxon>
        <taxon>Brassicaceae</taxon>
        <taxon>Camelineae</taxon>
        <taxon>Arabidopsis</taxon>
    </lineage>
</organism>
<sequence length="299" mass="33290">MGRTPCCDKIGLKKGPWTPEEDEVLVAHIKKNGHGSWRTLPKLAGLLRCGKSCRLRWTNYLRPDIKRGPFTADEEKLVIQLHAILGNRWAAIAAQLPGRTDNEIKNLWNTHLKKRLLSMGLDPRTHEPLPSYGLAKQAPSSPTTRHMAQWESARVEAEARLSRESMLFSPSFYSGVVKTECDHFLRIWNSEIGEAFRNLAPLDESTITSQSPCSRATSTSSALLKSSTNSWGGKEVTVAIHGSDYSPYSNDLEDDSTDSALQLLLDFPISDDDMSFLEENIDSYSQAPPIGLVSMVSKF</sequence>
<proteinExistence type="evidence at protein level"/>
<evidence type="ECO:0000255" key="1">
    <source>
        <dbReference type="PROSITE-ProRule" id="PRU00625"/>
    </source>
</evidence>
<evidence type="ECO:0000269" key="2">
    <source>
    </source>
</evidence>
<evidence type="ECO:0000269" key="3">
    <source>
    </source>
</evidence>
<evidence type="ECO:0000303" key="4">
    <source>
    </source>
</evidence>
<evidence type="ECO:0000303" key="5">
    <source>
    </source>
</evidence>
<evidence type="ECO:0000305" key="6"/>
<evidence type="ECO:0000312" key="7">
    <source>
        <dbReference type="Araport" id="AT3G61250"/>
    </source>
</evidence>
<evidence type="ECO:0000312" key="8">
    <source>
        <dbReference type="EMBL" id="CAB71055.1"/>
    </source>
</evidence>
<accession>Q9M2D9</accession>
<accession>Q9ZTF1</accession>
<reference key="1">
    <citation type="submission" date="2004-01" db="EMBL/GenBank/DDBJ databases">
        <title>The MYB transcription factor family in Arabidopsis: a genome-wide cloning and expression pattern analysis.</title>
        <authorList>
            <person name="Qu L."/>
            <person name="Gu H."/>
        </authorList>
    </citation>
    <scope>NUCLEOTIDE SEQUENCE [MRNA]</scope>
</reference>
<reference key="2">
    <citation type="journal article" date="2000" name="Nature">
        <title>Sequence and analysis of chromosome 3 of the plant Arabidopsis thaliana.</title>
        <authorList>
            <person name="Salanoubat M."/>
            <person name="Lemcke K."/>
            <person name="Rieger M."/>
            <person name="Ansorge W."/>
            <person name="Unseld M."/>
            <person name="Fartmann B."/>
            <person name="Valle G."/>
            <person name="Bloecker H."/>
            <person name="Perez-Alonso M."/>
            <person name="Obermaier B."/>
            <person name="Delseny M."/>
            <person name="Boutry M."/>
            <person name="Grivell L.A."/>
            <person name="Mache R."/>
            <person name="Puigdomenech P."/>
            <person name="De Simone V."/>
            <person name="Choisne N."/>
            <person name="Artiguenave F."/>
            <person name="Robert C."/>
            <person name="Brottier P."/>
            <person name="Wincker P."/>
            <person name="Cattolico L."/>
            <person name="Weissenbach J."/>
            <person name="Saurin W."/>
            <person name="Quetier F."/>
            <person name="Schaefer M."/>
            <person name="Mueller-Auer S."/>
            <person name="Gabel C."/>
            <person name="Fuchs M."/>
            <person name="Benes V."/>
            <person name="Wurmbach E."/>
            <person name="Drzonek H."/>
            <person name="Erfle H."/>
            <person name="Jordan N."/>
            <person name="Bangert S."/>
            <person name="Wiedelmann R."/>
            <person name="Kranz H."/>
            <person name="Voss H."/>
            <person name="Holland R."/>
            <person name="Brandt P."/>
            <person name="Nyakatura G."/>
            <person name="Vezzi A."/>
            <person name="D'Angelo M."/>
            <person name="Pallavicini A."/>
            <person name="Toppo S."/>
            <person name="Simionati B."/>
            <person name="Conrad A."/>
            <person name="Hornischer K."/>
            <person name="Kauer G."/>
            <person name="Loehnert T.-H."/>
            <person name="Nordsiek G."/>
            <person name="Reichelt J."/>
            <person name="Scharfe M."/>
            <person name="Schoen O."/>
            <person name="Bargues M."/>
            <person name="Terol J."/>
            <person name="Climent J."/>
            <person name="Navarro P."/>
            <person name="Collado C."/>
            <person name="Perez-Perez A."/>
            <person name="Ottenwaelder B."/>
            <person name="Duchemin D."/>
            <person name="Cooke R."/>
            <person name="Laudie M."/>
            <person name="Berger-Llauro C."/>
            <person name="Purnelle B."/>
            <person name="Masuy D."/>
            <person name="de Haan M."/>
            <person name="Maarse A.C."/>
            <person name="Alcaraz J.-P."/>
            <person name="Cottet A."/>
            <person name="Casacuberta E."/>
            <person name="Monfort A."/>
            <person name="Argiriou A."/>
            <person name="Flores M."/>
            <person name="Liguori R."/>
            <person name="Vitale D."/>
            <person name="Mannhaupt G."/>
            <person name="Haase D."/>
            <person name="Schoof H."/>
            <person name="Rudd S."/>
            <person name="Zaccaria P."/>
            <person name="Mewes H.-W."/>
            <person name="Mayer K.F.X."/>
            <person name="Kaul S."/>
            <person name="Town C.D."/>
            <person name="Koo H.L."/>
            <person name="Tallon L.J."/>
            <person name="Jenkins J."/>
            <person name="Rooney T."/>
            <person name="Rizzo M."/>
            <person name="Walts A."/>
            <person name="Utterback T."/>
            <person name="Fujii C.Y."/>
            <person name="Shea T.P."/>
            <person name="Creasy T.H."/>
            <person name="Haas B."/>
            <person name="Maiti R."/>
            <person name="Wu D."/>
            <person name="Peterson J."/>
            <person name="Van Aken S."/>
            <person name="Pai G."/>
            <person name="Militscher J."/>
            <person name="Sellers P."/>
            <person name="Gill J.E."/>
            <person name="Feldblyum T.V."/>
            <person name="Preuss D."/>
            <person name="Lin X."/>
            <person name="Nierman W.C."/>
            <person name="Salzberg S.L."/>
            <person name="White O."/>
            <person name="Venter J.C."/>
            <person name="Fraser C.M."/>
            <person name="Kaneko T."/>
            <person name="Nakamura Y."/>
            <person name="Sato S."/>
            <person name="Kato T."/>
            <person name="Asamizu E."/>
            <person name="Sasamoto S."/>
            <person name="Kimura T."/>
            <person name="Idesawa K."/>
            <person name="Kawashima K."/>
            <person name="Kishida Y."/>
            <person name="Kiyokawa C."/>
            <person name="Kohara M."/>
            <person name="Matsumoto M."/>
            <person name="Matsuno A."/>
            <person name="Muraki A."/>
            <person name="Nakayama S."/>
            <person name="Nakazaki N."/>
            <person name="Shinpo S."/>
            <person name="Takeuchi C."/>
            <person name="Wada T."/>
            <person name="Watanabe A."/>
            <person name="Yamada M."/>
            <person name="Yasuda M."/>
            <person name="Tabata S."/>
        </authorList>
    </citation>
    <scope>NUCLEOTIDE SEQUENCE [LARGE SCALE GENOMIC DNA]</scope>
    <source>
        <strain>cv. Columbia</strain>
    </source>
</reference>
<reference key="3">
    <citation type="journal article" date="2017" name="Plant J.">
        <title>Araport11: a complete reannotation of the Arabidopsis thaliana reference genome.</title>
        <authorList>
            <person name="Cheng C.Y."/>
            <person name="Krishnakumar V."/>
            <person name="Chan A.P."/>
            <person name="Thibaud-Nissen F."/>
            <person name="Schobel S."/>
            <person name="Town C.D."/>
        </authorList>
    </citation>
    <scope>GENOME REANNOTATION</scope>
    <source>
        <strain>cv. Columbia</strain>
    </source>
</reference>
<reference key="4">
    <citation type="submission" date="2008-07" db="EMBL/GenBank/DDBJ databases">
        <title>Arabidopsis ORF clones.</title>
        <authorList>
            <person name="De Los Reyes C."/>
            <person name="Quan R."/>
            <person name="Chen H."/>
            <person name="Bautista V.R."/>
            <person name="Kim C.J."/>
            <person name="Ecker J.R."/>
        </authorList>
    </citation>
    <scope>NUCLEOTIDE SEQUENCE [LARGE SCALE MRNA]</scope>
    <source>
        <strain>cv. Columbia</strain>
    </source>
</reference>
<reference key="5">
    <citation type="journal article" date="1998" name="Plant J.">
        <title>Towards functional characterisation of the members of the R2R3-MYB gene family from Arabidopsis thaliana.</title>
        <authorList>
            <person name="Kranz H.D."/>
            <person name="Denekamp M."/>
            <person name="Greco R."/>
            <person name="Jin H.-L."/>
            <person name="Leyva A."/>
            <person name="Meissner R.C."/>
            <person name="Petroni K."/>
            <person name="Urzainqui A."/>
            <person name="Bevan M."/>
            <person name="Martin C."/>
            <person name="Smeekens S."/>
            <person name="Tonelli C."/>
            <person name="Paz-Ares J."/>
            <person name="Weisshaar B."/>
        </authorList>
    </citation>
    <scope>NUCLEOTIDE SEQUENCE [MRNA] OF 76-299</scope>
    <source>
        <strain>cv. Columbia</strain>
    </source>
</reference>
<reference key="6">
    <citation type="journal article" date="2001" name="Curr. Opin. Plant Biol.">
        <title>The R2R3-MYB gene family in Arabidopsis thaliana.</title>
        <authorList>
            <person name="Stracke R."/>
            <person name="Werber M."/>
            <person name="Weisshaar B."/>
        </authorList>
    </citation>
    <scope>GENE FAMILY</scope>
    <scope>NOMENCLATURE</scope>
</reference>
<reference key="7">
    <citation type="journal article" date="2009" name="J. Genet. Genomics">
        <title>Characterization of Arabidopsis MYB transcription factor gene AtMYB17 and its possible regulation by LEAFY and AGL15.</title>
        <authorList>
            <person name="Zhang Y."/>
            <person name="Cao G."/>
            <person name="Qu L.J."/>
            <person name="Gu H."/>
        </authorList>
    </citation>
    <scope>FUNCTION</scope>
    <scope>SUBCELLULAR LOCATION</scope>
    <scope>TISSUE SPECIFICITY</scope>
    <scope>DEVELOPMENTAL STAGE</scope>
</reference>
<reference key="8">
    <citation type="journal article" date="2011" name="Development">
        <title>LATE MERISTEM IDENTITY2 acts together with LEAFY to activate APETALA1.</title>
        <authorList>
            <person name="Pastore J.J."/>
            <person name="Limpuangthip A."/>
            <person name="Yamaguchi N."/>
            <person name="Wu M.F."/>
            <person name="Sang Y."/>
            <person name="Han S.K."/>
            <person name="Malaspina L."/>
            <person name="Chavdaroff N."/>
            <person name="Yamaguchi A."/>
            <person name="Wagner D."/>
        </authorList>
    </citation>
    <scope>FUNCTION</scope>
    <scope>INTERACTION WITH LFY</scope>
    <scope>SUBCELLULAR LOCATION</scope>
    <scope>TISSUE SPECIFICITY</scope>
    <scope>DISRUPTION PHENOTYPE</scope>
</reference>
<dbReference type="EMBL" id="AY519601">
    <property type="protein sequence ID" value="AAS10071.1"/>
    <property type="molecule type" value="mRNA"/>
</dbReference>
<dbReference type="EMBL" id="AL137898">
    <property type="protein sequence ID" value="CAB71055.1"/>
    <property type="molecule type" value="Genomic_DNA"/>
</dbReference>
<dbReference type="EMBL" id="CP002686">
    <property type="protein sequence ID" value="AEE80179.1"/>
    <property type="molecule type" value="Genomic_DNA"/>
</dbReference>
<dbReference type="EMBL" id="BT033129">
    <property type="protein sequence ID" value="ACF28390.1"/>
    <property type="molecule type" value="mRNA"/>
</dbReference>
<dbReference type="EMBL" id="AF062866">
    <property type="protein sequence ID" value="AAC83588.1"/>
    <property type="molecule type" value="mRNA"/>
</dbReference>
<dbReference type="PIR" id="T47917">
    <property type="entry name" value="T47917"/>
</dbReference>
<dbReference type="PIR" id="T51638">
    <property type="entry name" value="T51638"/>
</dbReference>
<dbReference type="RefSeq" id="NP_191684.1">
    <property type="nucleotide sequence ID" value="NM_115989.4"/>
</dbReference>
<dbReference type="SMR" id="Q9M2D9"/>
<dbReference type="FunCoup" id="Q9M2D9">
    <property type="interactions" value="34"/>
</dbReference>
<dbReference type="STRING" id="3702.Q9M2D9"/>
<dbReference type="PaxDb" id="3702-AT3G61250.1"/>
<dbReference type="EnsemblPlants" id="AT3G61250.1">
    <property type="protein sequence ID" value="AT3G61250.1"/>
    <property type="gene ID" value="AT3G61250"/>
</dbReference>
<dbReference type="GeneID" id="825297"/>
<dbReference type="Gramene" id="AT3G61250.1">
    <property type="protein sequence ID" value="AT3G61250.1"/>
    <property type="gene ID" value="AT3G61250"/>
</dbReference>
<dbReference type="KEGG" id="ath:AT3G61250"/>
<dbReference type="Araport" id="AT3G61250"/>
<dbReference type="TAIR" id="AT3G61250">
    <property type="gene designation" value="MYB17"/>
</dbReference>
<dbReference type="eggNOG" id="KOG0048">
    <property type="taxonomic scope" value="Eukaryota"/>
</dbReference>
<dbReference type="HOGENOM" id="CLU_028567_6_0_1"/>
<dbReference type="InParanoid" id="Q9M2D9"/>
<dbReference type="OMA" id="TPCCERK"/>
<dbReference type="PhylomeDB" id="Q9M2D9"/>
<dbReference type="PRO" id="PR:Q9M2D9"/>
<dbReference type="Proteomes" id="UP000006548">
    <property type="component" value="Chromosome 3"/>
</dbReference>
<dbReference type="ExpressionAtlas" id="Q9M2D9">
    <property type="expression patterns" value="baseline and differential"/>
</dbReference>
<dbReference type="GO" id="GO:0005634">
    <property type="term" value="C:nucleus"/>
    <property type="evidence" value="ECO:0000314"/>
    <property type="project" value="UniProtKB"/>
</dbReference>
<dbReference type="GO" id="GO:0003677">
    <property type="term" value="F:DNA binding"/>
    <property type="evidence" value="ECO:0007669"/>
    <property type="project" value="UniProtKB-KW"/>
</dbReference>
<dbReference type="GO" id="GO:0003700">
    <property type="term" value="F:DNA-binding transcription factor activity"/>
    <property type="evidence" value="ECO:0000250"/>
    <property type="project" value="TAIR"/>
</dbReference>
<dbReference type="GO" id="GO:0009908">
    <property type="term" value="P:flower development"/>
    <property type="evidence" value="ECO:0007669"/>
    <property type="project" value="UniProtKB-KW"/>
</dbReference>
<dbReference type="GO" id="GO:0009909">
    <property type="term" value="P:regulation of flower development"/>
    <property type="evidence" value="ECO:0000315"/>
    <property type="project" value="TAIR"/>
</dbReference>
<dbReference type="CDD" id="cd00167">
    <property type="entry name" value="SANT"/>
    <property type="match status" value="2"/>
</dbReference>
<dbReference type="FunFam" id="1.10.10.60:FF:000198">
    <property type="entry name" value="MYB transcription factor"/>
    <property type="match status" value="1"/>
</dbReference>
<dbReference type="FunFam" id="1.10.10.60:FF:000121">
    <property type="entry name" value="Myb transcription factor"/>
    <property type="match status" value="1"/>
</dbReference>
<dbReference type="Gene3D" id="1.10.10.60">
    <property type="entry name" value="Homeodomain-like"/>
    <property type="match status" value="2"/>
</dbReference>
<dbReference type="InterPro" id="IPR009057">
    <property type="entry name" value="Homeodomain-like_sf"/>
</dbReference>
<dbReference type="InterPro" id="IPR017930">
    <property type="entry name" value="Myb_dom"/>
</dbReference>
<dbReference type="InterPro" id="IPR015495">
    <property type="entry name" value="Myb_TF_plants"/>
</dbReference>
<dbReference type="InterPro" id="IPR001005">
    <property type="entry name" value="SANT/Myb"/>
</dbReference>
<dbReference type="PANTHER" id="PTHR10641">
    <property type="entry name" value="MYB FAMILY TRANSCRIPTION FACTOR"/>
    <property type="match status" value="1"/>
</dbReference>
<dbReference type="PANTHER" id="PTHR10641:SF622">
    <property type="entry name" value="TRANSCRIPTION FACTOR MYB17"/>
    <property type="match status" value="1"/>
</dbReference>
<dbReference type="Pfam" id="PF00249">
    <property type="entry name" value="Myb_DNA-binding"/>
    <property type="match status" value="2"/>
</dbReference>
<dbReference type="SMART" id="SM00717">
    <property type="entry name" value="SANT"/>
    <property type="match status" value="2"/>
</dbReference>
<dbReference type="SUPFAM" id="SSF46689">
    <property type="entry name" value="Homeodomain-like"/>
    <property type="match status" value="1"/>
</dbReference>
<dbReference type="PROSITE" id="PS51294">
    <property type="entry name" value="HTH_MYB"/>
    <property type="match status" value="2"/>
</dbReference>
<protein>
    <recommendedName>
        <fullName evidence="6">Transcription factor MYB17</fullName>
    </recommendedName>
    <alternativeName>
        <fullName evidence="4">Myb-related protein 17</fullName>
        <shortName evidence="4">AtMYB17</shortName>
    </alternativeName>
    <alternativeName>
        <fullName>Protein LATE MERISTEM IDENTITY 2</fullName>
    </alternativeName>
</protein>
<feature type="chain" id="PRO_0000439926" description="Transcription factor MYB17">
    <location>
        <begin position="1"/>
        <end position="299"/>
    </location>
</feature>
<feature type="domain" description="HTH myb-type 1" evidence="1">
    <location>
        <begin position="9"/>
        <end position="61"/>
    </location>
</feature>
<feature type="domain" description="HTH myb-type 2" evidence="1">
    <location>
        <begin position="62"/>
        <end position="116"/>
    </location>
</feature>
<feature type="DNA-binding region" description="H-T-H motif" evidence="1">
    <location>
        <begin position="37"/>
        <end position="61"/>
    </location>
</feature>
<feature type="DNA-binding region" description="H-T-H motif" evidence="1">
    <location>
        <begin position="89"/>
        <end position="112"/>
    </location>
</feature>
<feature type="sequence conflict" description="In Ref. 5; AAC83588." evidence="6" ref="5">
    <original>L</original>
    <variation>Y</variation>
    <location>
        <position position="117"/>
    </location>
</feature>